<organism>
    <name type="scientific">Macrophomina phaseolina (strain MS6)</name>
    <name type="common">Charcoal rot fungus</name>
    <dbReference type="NCBI Taxonomy" id="1126212"/>
    <lineage>
        <taxon>Eukaryota</taxon>
        <taxon>Fungi</taxon>
        <taxon>Dikarya</taxon>
        <taxon>Ascomycota</taxon>
        <taxon>Pezizomycotina</taxon>
        <taxon>Dothideomycetes</taxon>
        <taxon>Dothideomycetes incertae sedis</taxon>
        <taxon>Botryosphaeriales</taxon>
        <taxon>Botryosphaeriaceae</taxon>
        <taxon>Macrophomina</taxon>
    </lineage>
</organism>
<keyword id="KW-0521">NADP</keyword>
<keyword id="KW-0547">Nucleotide-binding</keyword>
<keyword id="KW-0560">Oxidoreductase</keyword>
<keyword id="KW-1185">Reference proteome</keyword>
<dbReference type="EC" id="1.-.-.-" evidence="2"/>
<dbReference type="EMBL" id="AHHD01000324">
    <property type="protein sequence ID" value="EKG15183.1"/>
    <property type="status" value="ALT_SEQ"/>
    <property type="molecule type" value="Genomic_DNA"/>
</dbReference>
<dbReference type="SMR" id="P0DTN5"/>
<dbReference type="HOGENOM" id="CLU_336176_0_0_1"/>
<dbReference type="OrthoDB" id="3257095at2759"/>
<dbReference type="Proteomes" id="UP000007129">
    <property type="component" value="Unassembled WGS sequence"/>
</dbReference>
<dbReference type="GO" id="GO:0000166">
    <property type="term" value="F:nucleotide binding"/>
    <property type="evidence" value="ECO:0007669"/>
    <property type="project" value="UniProtKB-KW"/>
</dbReference>
<dbReference type="GO" id="GO:0016651">
    <property type="term" value="F:oxidoreductase activity, acting on NAD(P)H"/>
    <property type="evidence" value="ECO:0007669"/>
    <property type="project" value="InterPro"/>
</dbReference>
<dbReference type="CDD" id="cd08249">
    <property type="entry name" value="enoyl_reductase_like"/>
    <property type="match status" value="1"/>
</dbReference>
<dbReference type="Gene3D" id="3.90.180.10">
    <property type="entry name" value="Medium-chain alcohol dehydrogenases, catalytic domain"/>
    <property type="match status" value="1"/>
</dbReference>
<dbReference type="Gene3D" id="3.40.50.720">
    <property type="entry name" value="NAD(P)-binding Rossmann-like Domain"/>
    <property type="match status" value="1"/>
</dbReference>
<dbReference type="InterPro" id="IPR013149">
    <property type="entry name" value="ADH-like_C"/>
</dbReference>
<dbReference type="InterPro" id="IPR013154">
    <property type="entry name" value="ADH-like_N"/>
</dbReference>
<dbReference type="InterPro" id="IPR011032">
    <property type="entry name" value="GroES-like_sf"/>
</dbReference>
<dbReference type="InterPro" id="IPR036291">
    <property type="entry name" value="NAD(P)-bd_dom_sf"/>
</dbReference>
<dbReference type="InterPro" id="IPR020843">
    <property type="entry name" value="PKS_ER"/>
</dbReference>
<dbReference type="InterPro" id="IPR047122">
    <property type="entry name" value="Trans-enoyl_RdTase-like"/>
</dbReference>
<dbReference type="PANTHER" id="PTHR45348">
    <property type="entry name" value="HYPOTHETICAL OXIDOREDUCTASE (EUROFUNG)"/>
    <property type="match status" value="1"/>
</dbReference>
<dbReference type="PANTHER" id="PTHR45348:SF1">
    <property type="entry name" value="TRANS-ENOYL REDUCTASE STHE"/>
    <property type="match status" value="1"/>
</dbReference>
<dbReference type="Pfam" id="PF08240">
    <property type="entry name" value="ADH_N"/>
    <property type="match status" value="1"/>
</dbReference>
<dbReference type="Pfam" id="PF00107">
    <property type="entry name" value="ADH_zinc_N"/>
    <property type="match status" value="1"/>
</dbReference>
<dbReference type="SMART" id="SM00829">
    <property type="entry name" value="PKS_ER"/>
    <property type="match status" value="1"/>
</dbReference>
<dbReference type="SUPFAM" id="SSF50129">
    <property type="entry name" value="GroES-like"/>
    <property type="match status" value="1"/>
</dbReference>
<dbReference type="SUPFAM" id="SSF51735">
    <property type="entry name" value="NAD(P)-binding Rossmann-fold domains"/>
    <property type="match status" value="1"/>
</dbReference>
<name>MPSG_MACPH</name>
<comment type="function">
    <text evidence="2">Trans-enoyl reductase; part of the gene cluster that mediates the biosynthesis of macrophasetins, 3-decalinoyltetramic acids (DTAs) which feature a tetramate (pyrrolidine-2,4-dione) unit connected to a decalin fragment and that have potent bioactivities (PubMed:36452919). The PKS-NRPS mpsA together with its associated enoylreductase partner mpsG incorporate one unit of acetyl-CoA, seven units of malonyl-CoA, and one unit of L-alanine to assemble the linear tetramic acid intermediate corresponding to the backbone of macrophasetins (PubMed:36452919). Without the Diels-Alderase mpsD, the mpsA/G product can undergo the non-enzymatic intramolecular Diels-Alder (IMDA) reaction to generate both macrophasetin A and macrophasetin B (PubMed:36452919). Catalyzed by mpsD, the linear tetramic acid intermediate is thoroughly converted to macrophasetin A via the endo-IMDA reaction in a regioselective and stereoselective manner (PubMed:36452919). Finally, the cytochrome P450 monooxygenase mpsF catalyzes the hydroxylation at C20 to yield the end product macrophasetin C (PubMed:36452919).</text>
</comment>
<comment type="pathway">
    <text evidence="2">Secondary metabolite biosynthesis.</text>
</comment>
<comment type="subunit">
    <text evidence="1">Monomer.</text>
</comment>
<comment type="similarity">
    <text evidence="4">Belongs to the zinc-containing alcohol dehydrogenase family.</text>
</comment>
<comment type="sequence caution" evidence="4">
    <conflict type="erroneous gene model prediction">
        <sequence resource="EMBL-CDS" id="EKG15183"/>
    </conflict>
    <text>The predicted gene MPH_07630 has been split into 2 genes: mpsG/MPH_07630_1 and MPH_07630_2.</text>
</comment>
<accession>P0DTN5</accession>
<accession>K2RKI1</accession>
<proteinExistence type="evidence at protein level"/>
<gene>
    <name evidence="3" type="primary">mpsG</name>
    <name type="ORF">MPH_07630_1</name>
</gene>
<reference key="1">
    <citation type="journal article" date="2012" name="BMC Genomics">
        <title>Tools to kill: Genome of one of the most destructive plant pathogenic fungi Macrophomina phaseolina.</title>
        <authorList>
            <person name="Islam M.S."/>
            <person name="Haque M.S."/>
            <person name="Islam M.M."/>
            <person name="Emdad E.M."/>
            <person name="Halim A."/>
            <person name="Hossen Q.M.M."/>
            <person name="Hossain M.Z."/>
            <person name="Ahmed B."/>
            <person name="Rahim S."/>
            <person name="Rahman M.S."/>
            <person name="Alam M.M."/>
            <person name="Hou S."/>
            <person name="Wan X."/>
            <person name="Saito J.A."/>
            <person name="Alam M."/>
        </authorList>
    </citation>
    <scope>NUCLEOTIDE SEQUENCE [LARGE SCALE GENOMIC DNA]</scope>
    <source>
        <strain>MS6</strain>
    </source>
</reference>
<reference key="2">
    <citation type="journal article" date="2022" name="Front. Microbiol.">
        <title>Discovery and biosynthesis of macrophasetins from the plant pathogen fungus Macrophomina phaseolina.</title>
        <authorList>
            <person name="Yu C."/>
            <person name="Chen L."/>
            <person name="Gao Y.L."/>
            <person name="Liu J."/>
            <person name="Li P.L."/>
            <person name="Zhang M.L."/>
            <person name="Li Q."/>
            <person name="Zhang H.D."/>
            <person name="Tang M.C."/>
            <person name="Li L."/>
        </authorList>
    </citation>
    <scope>FUNCTION</scope>
    <scope>CATALYTIC ACTIVITY</scope>
    <scope>PATHWAY</scope>
</reference>
<evidence type="ECO:0000250" key="1">
    <source>
        <dbReference type="UniProtKB" id="Q9Y7D0"/>
    </source>
</evidence>
<evidence type="ECO:0000269" key="2">
    <source>
    </source>
</evidence>
<evidence type="ECO:0000303" key="3">
    <source>
    </source>
</evidence>
<evidence type="ECO:0000305" key="4"/>
<protein>
    <recommendedName>
        <fullName evidence="3">Trans-enoyl reductase mpsG</fullName>
        <ecNumber evidence="2">1.-.-.-</ecNumber>
    </recommendedName>
    <alternativeName>
        <fullName evidence="3">Macrophasetins biosynthesis cluster protein G</fullName>
    </alternativeName>
</protein>
<feature type="chain" id="PRO_0000457828" description="Trans-enoyl reductase mpsG">
    <location>
        <begin position="1"/>
        <end position="359"/>
    </location>
</feature>
<feature type="binding site" evidence="1">
    <location>
        <position position="212"/>
    </location>
    <ligand>
        <name>NADP(+)</name>
        <dbReference type="ChEBI" id="CHEBI:58349"/>
    </ligand>
</feature>
<feature type="binding site" evidence="1">
    <location>
        <position position="259"/>
    </location>
    <ligand>
        <name>NADP(+)</name>
        <dbReference type="ChEBI" id="CHEBI:58349"/>
    </ligand>
</feature>
<feature type="binding site" evidence="1">
    <location>
        <position position="278"/>
    </location>
    <ligand>
        <name>NADP(+)</name>
        <dbReference type="ChEBI" id="CHEBI:58349"/>
    </ligand>
</feature>
<sequence>MADLPAKQTALTFQDDGTLGISHDAPVAELKPDMIIVKTAAVSVNPVDTKMESGFAKAGSIGGCDFAGTVVAVGAAVRRPVKVGDRVTGAVMGSDPNDPSSGSFATYVSAPADITLTLPESVPWAVGTSLSTVWFTVGQALFHHLLPDLAVTPSSPYAGDKPITVLVYGGSTSVGTAAIQLLKLAGLRPVTTCSPRNFDLVKSYGAEEAYDYRSPTCAADIKAATKSNLKYALDCITTKDSIAICYAALGRAGGRYTALDPYWEATAATRKTVKANWTLGITMLGKDIAWPAPYGRPGSEDARAFGAKWAAELQALLESGKMRPHPLRAKEGASWEDVLAGLKEVKEGKVSGEKLVFVF</sequence>